<sequence length="203" mass="22678">MMENLQVNQREKKTRHSSRQCRRKGLVPGVIYGKGINNFLFEIGELELNHALSVTGEHGLLSINSQEGSLNTLIKEVQRDPVTRRVLHIDLEKVEGNEEIETAVPINYVGEEYINKLDAVLQKNLDSIKVKCSPSNIPKGVNLNVGRAKPGDQFKIADVEFGNEITVVDDLNSIVASVSYDQKIITQEVVDQEVAENRAKKES</sequence>
<accession>Q8XJ87</accession>
<keyword id="KW-1185">Reference proteome</keyword>
<keyword id="KW-0687">Ribonucleoprotein</keyword>
<keyword id="KW-0689">Ribosomal protein</keyword>
<keyword id="KW-0694">RNA-binding</keyword>
<keyword id="KW-0699">rRNA-binding</keyword>
<comment type="function">
    <text evidence="1">This is one of the proteins that binds to the 5S RNA in the ribosome where it forms part of the central protuberance.</text>
</comment>
<comment type="subunit">
    <text evidence="1">Part of the 50S ribosomal subunit; part of the 5S rRNA/L5/L18/L25 subcomplex. Contacts the 5S rRNA. Binds to the 5S rRNA independently of L5 and L18.</text>
</comment>
<comment type="similarity">
    <text evidence="1">Belongs to the bacterial ribosomal protein bL25 family. CTC subfamily.</text>
</comment>
<proteinExistence type="inferred from homology"/>
<protein>
    <recommendedName>
        <fullName evidence="1">Large ribosomal subunit protein bL25</fullName>
    </recommendedName>
    <alternativeName>
        <fullName evidence="3">50S ribosomal protein L25</fullName>
    </alternativeName>
    <alternativeName>
        <fullName evidence="1">General stress protein CTC</fullName>
    </alternativeName>
</protein>
<evidence type="ECO:0000255" key="1">
    <source>
        <dbReference type="HAMAP-Rule" id="MF_01334"/>
    </source>
</evidence>
<evidence type="ECO:0000256" key="2">
    <source>
        <dbReference type="SAM" id="MobiDB-lite"/>
    </source>
</evidence>
<evidence type="ECO:0000305" key="3"/>
<feature type="chain" id="PRO_0000181537" description="Large ribosomal subunit protein bL25">
    <location>
        <begin position="1"/>
        <end position="203"/>
    </location>
</feature>
<feature type="region of interest" description="Disordered" evidence="2">
    <location>
        <begin position="1"/>
        <end position="21"/>
    </location>
</feature>
<feature type="compositionally biased region" description="Basic residues" evidence="2">
    <location>
        <begin position="12"/>
        <end position="21"/>
    </location>
</feature>
<reference key="1">
    <citation type="journal article" date="2002" name="Proc. Natl. Acad. Sci. U.S.A.">
        <title>Complete genome sequence of Clostridium perfringens, an anaerobic flesh-eater.</title>
        <authorList>
            <person name="Shimizu T."/>
            <person name="Ohtani K."/>
            <person name="Hirakawa H."/>
            <person name="Ohshima K."/>
            <person name="Yamashita A."/>
            <person name="Shiba T."/>
            <person name="Ogasawara N."/>
            <person name="Hattori M."/>
            <person name="Kuhara S."/>
            <person name="Hayashi H."/>
        </authorList>
    </citation>
    <scope>NUCLEOTIDE SEQUENCE [LARGE SCALE GENOMIC DNA]</scope>
    <source>
        <strain>13 / Type A</strain>
    </source>
</reference>
<gene>
    <name evidence="1" type="primary">rplY</name>
    <name evidence="1" type="synonym">ctc</name>
    <name type="ordered locus">CPE1874</name>
</gene>
<dbReference type="EMBL" id="BA000016">
    <property type="protein sequence ID" value="BAB81580.1"/>
    <property type="molecule type" value="Genomic_DNA"/>
</dbReference>
<dbReference type="RefSeq" id="WP_003469843.1">
    <property type="nucleotide sequence ID" value="NC_003366.1"/>
</dbReference>
<dbReference type="SMR" id="Q8XJ87"/>
<dbReference type="STRING" id="195102.gene:10491139"/>
<dbReference type="KEGG" id="cpe:CPE1874"/>
<dbReference type="HOGENOM" id="CLU_075939_2_2_9"/>
<dbReference type="Proteomes" id="UP000000818">
    <property type="component" value="Chromosome"/>
</dbReference>
<dbReference type="GO" id="GO:0022625">
    <property type="term" value="C:cytosolic large ribosomal subunit"/>
    <property type="evidence" value="ECO:0007669"/>
    <property type="project" value="TreeGrafter"/>
</dbReference>
<dbReference type="GO" id="GO:0008097">
    <property type="term" value="F:5S rRNA binding"/>
    <property type="evidence" value="ECO:0007669"/>
    <property type="project" value="InterPro"/>
</dbReference>
<dbReference type="GO" id="GO:0003735">
    <property type="term" value="F:structural constituent of ribosome"/>
    <property type="evidence" value="ECO:0007669"/>
    <property type="project" value="InterPro"/>
</dbReference>
<dbReference type="GO" id="GO:0006412">
    <property type="term" value="P:translation"/>
    <property type="evidence" value="ECO:0007669"/>
    <property type="project" value="UniProtKB-UniRule"/>
</dbReference>
<dbReference type="CDD" id="cd00495">
    <property type="entry name" value="Ribosomal_L25_TL5_CTC"/>
    <property type="match status" value="1"/>
</dbReference>
<dbReference type="Gene3D" id="2.170.120.20">
    <property type="entry name" value="Ribosomal protein L25, beta domain"/>
    <property type="match status" value="1"/>
</dbReference>
<dbReference type="Gene3D" id="2.40.240.10">
    <property type="entry name" value="Ribosomal Protein L25, Chain P"/>
    <property type="match status" value="1"/>
</dbReference>
<dbReference type="HAMAP" id="MF_01334">
    <property type="entry name" value="Ribosomal_bL25_CTC"/>
    <property type="match status" value="1"/>
</dbReference>
<dbReference type="InterPro" id="IPR020056">
    <property type="entry name" value="Rbsml_bL25/Gln-tRNA_synth_N"/>
</dbReference>
<dbReference type="InterPro" id="IPR011035">
    <property type="entry name" value="Ribosomal_bL25/Gln-tRNA_synth"/>
</dbReference>
<dbReference type="InterPro" id="IPR020057">
    <property type="entry name" value="Ribosomal_bL25_b-dom"/>
</dbReference>
<dbReference type="InterPro" id="IPR037121">
    <property type="entry name" value="Ribosomal_bL25_C"/>
</dbReference>
<dbReference type="InterPro" id="IPR001021">
    <property type="entry name" value="Ribosomal_bL25_long"/>
</dbReference>
<dbReference type="InterPro" id="IPR029751">
    <property type="entry name" value="Ribosomal_L25_dom"/>
</dbReference>
<dbReference type="InterPro" id="IPR020930">
    <property type="entry name" value="Ribosomal_uL5_bac-type"/>
</dbReference>
<dbReference type="NCBIfam" id="TIGR00731">
    <property type="entry name" value="bL25_bact_ctc"/>
    <property type="match status" value="1"/>
</dbReference>
<dbReference type="PANTHER" id="PTHR33284">
    <property type="entry name" value="RIBOSOMAL PROTEIN L25/GLN-TRNA SYNTHETASE, ANTI-CODON-BINDING DOMAIN-CONTAINING PROTEIN"/>
    <property type="match status" value="1"/>
</dbReference>
<dbReference type="PANTHER" id="PTHR33284:SF1">
    <property type="entry name" value="RIBOSOMAL PROTEIN L25_GLN-TRNA SYNTHETASE, ANTI-CODON-BINDING DOMAIN-CONTAINING PROTEIN"/>
    <property type="match status" value="1"/>
</dbReference>
<dbReference type="Pfam" id="PF01386">
    <property type="entry name" value="Ribosomal_L25p"/>
    <property type="match status" value="1"/>
</dbReference>
<dbReference type="Pfam" id="PF14693">
    <property type="entry name" value="Ribosomal_TL5_C"/>
    <property type="match status" value="1"/>
</dbReference>
<dbReference type="SUPFAM" id="SSF50715">
    <property type="entry name" value="Ribosomal protein L25-like"/>
    <property type="match status" value="1"/>
</dbReference>
<organism>
    <name type="scientific">Clostridium perfringens (strain 13 / Type A)</name>
    <dbReference type="NCBI Taxonomy" id="195102"/>
    <lineage>
        <taxon>Bacteria</taxon>
        <taxon>Bacillati</taxon>
        <taxon>Bacillota</taxon>
        <taxon>Clostridia</taxon>
        <taxon>Eubacteriales</taxon>
        <taxon>Clostridiaceae</taxon>
        <taxon>Clostridium</taxon>
    </lineage>
</organism>
<name>RL25_CLOPE</name>